<organism>
    <name type="scientific">Homo sapiens</name>
    <name type="common">Human</name>
    <dbReference type="NCBI Taxonomy" id="9606"/>
    <lineage>
        <taxon>Eukaryota</taxon>
        <taxon>Metazoa</taxon>
        <taxon>Chordata</taxon>
        <taxon>Craniata</taxon>
        <taxon>Vertebrata</taxon>
        <taxon>Euteleostomi</taxon>
        <taxon>Mammalia</taxon>
        <taxon>Eutheria</taxon>
        <taxon>Euarchontoglires</taxon>
        <taxon>Primates</taxon>
        <taxon>Haplorrhini</taxon>
        <taxon>Catarrhini</taxon>
        <taxon>Hominidae</taxon>
        <taxon>Homo</taxon>
    </lineage>
</organism>
<gene>
    <name evidence="12" type="primary">UGT2A2</name>
</gene>
<reference key="1">
    <citation type="journal article" date="2009" name="Pharmacogenet. Genomics">
        <title>Human UDP-glucuronosyltransferase UGT2A2: cDNA construction, expression, and functional characterization in comparison with UGT2A1 and UGT2A3.</title>
        <authorList>
            <person name="Sneitz N."/>
            <person name="Court M.H."/>
            <person name="Zhang X."/>
            <person name="Laajanen K."/>
            <person name="Yee K.K."/>
            <person name="Dalton P."/>
            <person name="Ding X."/>
            <person name="Finel M."/>
        </authorList>
    </citation>
    <scope>NUCLEOTIDE SEQUENCE [MRNA] (ISOFORMS 1 AND 2)</scope>
    <scope>FUNCTION</scope>
    <scope>CATALYTIC ACTIVITY</scope>
    <scope>TISSUE SPECIFICITY</scope>
    <source>
        <tissue>Nasal mucosa</tissue>
    </source>
</reference>
<reference key="2">
    <citation type="journal article" date="2005" name="Nature">
        <title>Generation and annotation of the DNA sequences of human chromosomes 2 and 4.</title>
        <authorList>
            <person name="Hillier L.W."/>
            <person name="Graves T.A."/>
            <person name="Fulton R.S."/>
            <person name="Fulton L.A."/>
            <person name="Pepin K.H."/>
            <person name="Minx P."/>
            <person name="Wagner-McPherson C."/>
            <person name="Layman D."/>
            <person name="Wylie K."/>
            <person name="Sekhon M."/>
            <person name="Becker M.C."/>
            <person name="Fewell G.A."/>
            <person name="Delehaunty K.D."/>
            <person name="Miner T.L."/>
            <person name="Nash W.E."/>
            <person name="Kremitzki C."/>
            <person name="Oddy L."/>
            <person name="Du H."/>
            <person name="Sun H."/>
            <person name="Bradshaw-Cordum H."/>
            <person name="Ali J."/>
            <person name="Carter J."/>
            <person name="Cordes M."/>
            <person name="Harris A."/>
            <person name="Isak A."/>
            <person name="van Brunt A."/>
            <person name="Nguyen C."/>
            <person name="Du F."/>
            <person name="Courtney L."/>
            <person name="Kalicki J."/>
            <person name="Ozersky P."/>
            <person name="Abbott S."/>
            <person name="Armstrong J."/>
            <person name="Belter E.A."/>
            <person name="Caruso L."/>
            <person name="Cedroni M."/>
            <person name="Cotton M."/>
            <person name="Davidson T."/>
            <person name="Desai A."/>
            <person name="Elliott G."/>
            <person name="Erb T."/>
            <person name="Fronick C."/>
            <person name="Gaige T."/>
            <person name="Haakenson W."/>
            <person name="Haglund K."/>
            <person name="Holmes A."/>
            <person name="Harkins R."/>
            <person name="Kim K."/>
            <person name="Kruchowski S.S."/>
            <person name="Strong C.M."/>
            <person name="Grewal N."/>
            <person name="Goyea E."/>
            <person name="Hou S."/>
            <person name="Levy A."/>
            <person name="Martinka S."/>
            <person name="Mead K."/>
            <person name="McLellan M.D."/>
            <person name="Meyer R."/>
            <person name="Randall-Maher J."/>
            <person name="Tomlinson C."/>
            <person name="Dauphin-Kohlberg S."/>
            <person name="Kozlowicz-Reilly A."/>
            <person name="Shah N."/>
            <person name="Swearengen-Shahid S."/>
            <person name="Snider J."/>
            <person name="Strong J.T."/>
            <person name="Thompson J."/>
            <person name="Yoakum M."/>
            <person name="Leonard S."/>
            <person name="Pearman C."/>
            <person name="Trani L."/>
            <person name="Radionenko M."/>
            <person name="Waligorski J.E."/>
            <person name="Wang C."/>
            <person name="Rock S.M."/>
            <person name="Tin-Wollam A.-M."/>
            <person name="Maupin R."/>
            <person name="Latreille P."/>
            <person name="Wendl M.C."/>
            <person name="Yang S.-P."/>
            <person name="Pohl C."/>
            <person name="Wallis J.W."/>
            <person name="Spieth J."/>
            <person name="Bieri T.A."/>
            <person name="Berkowicz N."/>
            <person name="Nelson J.O."/>
            <person name="Osborne J."/>
            <person name="Ding L."/>
            <person name="Meyer R."/>
            <person name="Sabo A."/>
            <person name="Shotland Y."/>
            <person name="Sinha P."/>
            <person name="Wohldmann P.E."/>
            <person name="Cook L.L."/>
            <person name="Hickenbotham M.T."/>
            <person name="Eldred J."/>
            <person name="Williams D."/>
            <person name="Jones T.A."/>
            <person name="She X."/>
            <person name="Ciccarelli F.D."/>
            <person name="Izaurralde E."/>
            <person name="Taylor J."/>
            <person name="Schmutz J."/>
            <person name="Myers R.M."/>
            <person name="Cox D.R."/>
            <person name="Huang X."/>
            <person name="McPherson J.D."/>
            <person name="Mardis E.R."/>
            <person name="Clifton S.W."/>
            <person name="Warren W.C."/>
            <person name="Chinwalla A.T."/>
            <person name="Eddy S.R."/>
            <person name="Marra M.A."/>
            <person name="Ovcharenko I."/>
            <person name="Furey T.S."/>
            <person name="Miller W."/>
            <person name="Eichler E.E."/>
            <person name="Bork P."/>
            <person name="Suyama M."/>
            <person name="Torrents D."/>
            <person name="Waterston R.H."/>
            <person name="Wilson R.K."/>
        </authorList>
    </citation>
    <scope>NUCLEOTIDE SEQUENCE [LARGE SCALE GENOMIC DNA]</scope>
</reference>
<reference key="3">
    <citation type="journal article" date="2008" name="Drug Metab. Dispos.">
        <title>The configuration of the 17-hydroxy group variably influences the glucuronidation of beta-estradiol and epiestradiol by human UDP-glucuronosyltransferases.</title>
        <authorList>
            <person name="Itaeaho K."/>
            <person name="Mackenzie P.I."/>
            <person name="Ikushiro S."/>
            <person name="Miners J.O."/>
            <person name="Finel M."/>
        </authorList>
    </citation>
    <scope>FUNCTION</scope>
    <scope>CATALYTIC ACTIVITY</scope>
    <scope>BIOPHYSICOCHEMICAL PROPERTIES</scope>
</reference>
<reference key="4">
    <citation type="journal article" date="2013" name="Drug Metab. Dispos.">
        <title>The Human UDP-glucuronosyltransferase UGT2A1 and UGT2A2 enzymes are highly active in bile acid glucuronidation.</title>
        <authorList>
            <person name="Perreault M."/>
            <person name="Gauthier-Landry L."/>
            <person name="Trottier J."/>
            <person name="Verreault M."/>
            <person name="Caron P."/>
            <person name="Finel M."/>
            <person name="Barbier O."/>
        </authorList>
    </citation>
    <scope>FUNCTION</scope>
    <scope>CATALYTIC ACTIVITY</scope>
    <scope>BIOPHYSICOCHEMICAL PROPERTIES</scope>
</reference>
<reference key="5">
    <citation type="journal article" date="2013" name="Drug Metab. Dispos.">
        <title>Regiospecificity and stereospecificity of human UDP-glucuronosyltransferases in the glucuronidation of estriol, 16-epiestriol, 17-epiestriol, and 13-epiestradiol.</title>
        <authorList>
            <person name="Sneitz N."/>
            <person name="Vahermo M."/>
            <person name="Mosorin J."/>
            <person name="Laakkonen L."/>
            <person name="Poirier D."/>
            <person name="Finel M."/>
        </authorList>
    </citation>
    <scope>FUNCTION</scope>
    <scope>CATALYTIC ACTIVITY</scope>
    <scope>BIOPHYSICOCHEMICAL PROPERTIES</scope>
</reference>
<sequence>MVSIRDFTMPKKFVQMLVFNLTLTEVVLSGNVLIWPTDGSHWLNIKIILEELIQRNHNVTVLASSATLFINSNPDSPVNFEVIPVSYKKSNIDSLIEHMIMLWIDHRPTPLTIWAFYKELGKLLDTFFQINIQLCDGVLKNPKLMARLQKGGFDVLVADPVTICGDLVALKLGIPFMYTLRFSPASTVERHCGKIPAPVSYVPAALSELTDQMTFGERIKNTISYSLQDYIFQSYWGEWNSYYSKILGRPTTLCETMGKAEIWLIRTYWDFEFPRPYLPNFEFVGGLHCKPAKPLPKEMEEFIQSSGKNGVVVFSLGSMVKNLTEEKANLIASALAQIPQKVLWRYKGKKPATLGNNTQLFDWIPQNDLLGHPKTKAFITHGGTNGIYEAIYHGVPMVGVPMFADQPDNIAHMKAKGAAVEVNLNTMTSVDLLSALRTVINEPSYKENAMRLSRIHHDQPVKPLDRAVFWIEFVMRHKGAKHLRVAAHDLTWFQYHSLDVIGFLLVCVTTAIFLVIQCCLFSCQKFGKIGKKKKRE</sequence>
<proteinExistence type="evidence at protein level"/>
<keyword id="KW-0025">Alternative splicing</keyword>
<keyword id="KW-0256">Endoplasmic reticulum</keyword>
<keyword id="KW-0325">Glycoprotein</keyword>
<keyword id="KW-0328">Glycosyltransferase</keyword>
<keyword id="KW-0443">Lipid metabolism</keyword>
<keyword id="KW-0472">Membrane</keyword>
<keyword id="KW-1267">Proteomics identification</keyword>
<keyword id="KW-1185">Reference proteome</keyword>
<keyword id="KW-0808">Transferase</keyword>
<keyword id="KW-0812">Transmembrane</keyword>
<keyword id="KW-1133">Transmembrane helix</keyword>
<comment type="function">
    <text evidence="2 3 4 5">UDP-glucuronosyltransferase (UGT) that catalyzes phase II biotransformation reactions in which lipophilic substrates are conjugated with glucuronic acid to increase the metabolite's water solubility, thereby facilitating excretion into either the urine or bile (PubMed:18719240, PubMed:19858781, PubMed:23288867, PubMed:23756265). Essential for the elimination and detoxification of drugs, xenobiotics and endogenous compounds (PubMed:19858781, PubMed:23756265). Catalyzes the glucuronidation of endogenous estrogen hormone estradiol (PubMed:18719240, PubMed:23288867). Contributes to bile acid (BA) detoxification by catalyzing the glucuronidation of BA substrates, which are natural detergents for dietary lipids absorption (PubMed:23756265). Shows a potential role in detoxification of toxic waste compounds in the amniotic fluid before birth, and air-born chemical after birth (PubMed:19858781).</text>
</comment>
<comment type="catalytic activity">
    <reaction evidence="2 3 4 5">
        <text>glucuronate acceptor + UDP-alpha-D-glucuronate = acceptor beta-D-glucuronoside + UDP + H(+)</text>
        <dbReference type="Rhea" id="RHEA:21032"/>
        <dbReference type="ChEBI" id="CHEBI:15378"/>
        <dbReference type="ChEBI" id="CHEBI:58052"/>
        <dbReference type="ChEBI" id="CHEBI:58223"/>
        <dbReference type="ChEBI" id="CHEBI:132367"/>
        <dbReference type="ChEBI" id="CHEBI:132368"/>
        <dbReference type="EC" id="2.4.1.17"/>
    </reaction>
    <physiologicalReaction direction="left-to-right" evidence="8 9 10 11">
        <dbReference type="Rhea" id="RHEA:21033"/>
    </physiologicalReaction>
</comment>
<comment type="catalytic activity">
    <reaction evidence="2 4">
        <text>17alpha-estradiol + UDP-alpha-D-glucuronate = 17alpha-estradiol 3-O-(beta-D-glucuronate) + UDP + H(+)</text>
        <dbReference type="Rhea" id="RHEA:52868"/>
        <dbReference type="ChEBI" id="CHEBI:15378"/>
        <dbReference type="ChEBI" id="CHEBI:17160"/>
        <dbReference type="ChEBI" id="CHEBI:57529"/>
        <dbReference type="ChEBI" id="CHEBI:58052"/>
        <dbReference type="ChEBI" id="CHEBI:58223"/>
    </reaction>
    <physiologicalReaction direction="left-to-right" evidence="4 8">
        <dbReference type="Rhea" id="RHEA:52869"/>
    </physiologicalReaction>
</comment>
<comment type="catalytic activity">
    <reaction evidence="2">
        <text>17beta-estradiol + UDP-alpha-D-glucuronate = 17beta-estradiol 3-O-(beta-D-glucuronate) + UDP + H(+)</text>
        <dbReference type="Rhea" id="RHEA:52460"/>
        <dbReference type="ChEBI" id="CHEBI:15378"/>
        <dbReference type="ChEBI" id="CHEBI:16469"/>
        <dbReference type="ChEBI" id="CHEBI:58052"/>
        <dbReference type="ChEBI" id="CHEBI:58223"/>
        <dbReference type="ChEBI" id="CHEBI:136641"/>
    </reaction>
    <physiologicalReaction direction="left-to-right" evidence="8">
        <dbReference type="Rhea" id="RHEA:52461"/>
    </physiologicalReaction>
</comment>
<comment type="catalytic activity">
    <reaction evidence="5">
        <text>chenodeoxycholate + UDP-alpha-D-glucuronate = chenodeoxycholoyl-24-O-(beta-D-glucuronate) + UDP</text>
        <dbReference type="Rhea" id="RHEA:52940"/>
        <dbReference type="ChEBI" id="CHEBI:36234"/>
        <dbReference type="ChEBI" id="CHEBI:58052"/>
        <dbReference type="ChEBI" id="CHEBI:58223"/>
        <dbReference type="ChEBI" id="CHEBI:136899"/>
    </reaction>
    <physiologicalReaction direction="left-to-right" evidence="11">
        <dbReference type="Rhea" id="RHEA:52941"/>
    </physiologicalReaction>
</comment>
<comment type="catalytic activity">
    <reaction evidence="5">
        <text>lithocholate + UDP-alpha-D-glucuronate = lithocholoyl-24-O-(beta-D-glucuronate) + UDP</text>
        <dbReference type="Rhea" id="RHEA:52952"/>
        <dbReference type="ChEBI" id="CHEBI:29744"/>
        <dbReference type="ChEBI" id="CHEBI:58052"/>
        <dbReference type="ChEBI" id="CHEBI:58223"/>
        <dbReference type="ChEBI" id="CHEBI:136902"/>
    </reaction>
    <physiologicalReaction direction="left-to-right" evidence="11">
        <dbReference type="Rhea" id="RHEA:52953"/>
    </physiologicalReaction>
</comment>
<comment type="catalytic activity">
    <reaction evidence="5">
        <text>deoxycholate + UDP-alpha-D-glucuronate = deoxycholoyl-24-O-(beta-D-glucuronate) + UDP</text>
        <dbReference type="Rhea" id="RHEA:52948"/>
        <dbReference type="ChEBI" id="CHEBI:23614"/>
        <dbReference type="ChEBI" id="CHEBI:58052"/>
        <dbReference type="ChEBI" id="CHEBI:58223"/>
        <dbReference type="ChEBI" id="CHEBI:136901"/>
    </reaction>
    <physiologicalReaction direction="left-to-right" evidence="11">
        <dbReference type="Rhea" id="RHEA:52949"/>
    </physiologicalReaction>
</comment>
<comment type="catalytic activity">
    <reaction evidence="5">
        <text>hyocholate + UDP-alpha-D-glucuronate = hyocholoyl-24-O-(beta-D-glucuronate) + UDP</text>
        <dbReference type="Rhea" id="RHEA:52960"/>
        <dbReference type="ChEBI" id="CHEBI:58052"/>
        <dbReference type="ChEBI" id="CHEBI:58223"/>
        <dbReference type="ChEBI" id="CHEBI:133661"/>
        <dbReference type="ChEBI" id="CHEBI:136904"/>
    </reaction>
    <physiologicalReaction direction="left-to-right" evidence="11">
        <dbReference type="Rhea" id="RHEA:52961"/>
    </physiologicalReaction>
</comment>
<comment type="catalytic activity">
    <reaction evidence="5">
        <text>hyodeoxycholate + UDP-alpha-D-glucuronate = hyodeoxycholate 6-O-(beta-D-glucuronate) + UDP + H(+)</text>
        <dbReference type="Rhea" id="RHEA:52964"/>
        <dbReference type="ChEBI" id="CHEBI:15378"/>
        <dbReference type="ChEBI" id="CHEBI:58052"/>
        <dbReference type="ChEBI" id="CHEBI:58223"/>
        <dbReference type="ChEBI" id="CHEBI:58875"/>
        <dbReference type="ChEBI" id="CHEBI:136905"/>
    </reaction>
    <physiologicalReaction direction="left-to-right" evidence="11">
        <dbReference type="Rhea" id="RHEA:52965"/>
    </physiologicalReaction>
</comment>
<comment type="biophysicochemical properties">
    <kinetics>
        <KM evidence="2">45.4 uM for 17beta-estradiol/estradiol (when assaying glucuronidation at position 3)</KM>
        <KM evidence="3">55.1 uM for UDP-glucuronate (with 4-methyl-umbelliferone as substrate)</KM>
        <KM evidence="3">4469 uM for 4-nitrophenol</KM>
        <KM evidence="3">2998 uM for 4-methyl-umbelliferone</KM>
        <KM evidence="3">245 uM for 4-phenylphenol</KM>
        <KM evidence="5">3442.9 uM for cholate (when assaying glucuronidation at position 24)</KM>
        <KM evidence="5">143.6 uM for chenodeoxycholate (when assaying glucuronidation at position 24)</KM>
        <KM evidence="5">107.1 uM for lithocholate (when assaying glucuronidation at position 3)</KM>
        <KM evidence="5">113.7 uM for lithocholate (when assaying glucuronidation at position 24)</KM>
        <KM evidence="5">178.3 uM for deoxycholate (when assaying glucuronidation at position 3)</KM>
        <KM evidence="5">189 uM for deoxycholate (when assaying glucuronidation at position 24)</KM>
        <KM evidence="5">150.4 uM for hyodeoxycholate (when assaying glucuronidation at position 6)</KM>
        <KM evidence="5">226.1 uM for hyodeoxycholate (when assaying glucuronidation at position 24)</KM>
        <KM evidence="5">222.4 uM for hyocholate (when assaying glucuronidation at position 6)</KM>
        <KM evidence="5">465.8 uM for hyocholate (when assaying glucuronidation at position 24)</KM>
        <Vmax evidence="4">29.7 pmol/min/mg enzyme for the formation of 17alpha-estradiol 3-O-(beta-D-glucuronate)</Vmax>
        <Vmax evidence="4">4.0 pmol/min/mg enzyme for the formation of 17beta-estradiol 3-O-(beta-D-glucuronate)</Vmax>
        <Vmax evidence="4">1.8 pmol/min/mg enzyme for the formation of 17alpha-estradiol 17-O-(beta-D-glucuronate)</Vmax>
        <Vmax evidence="4">1.4 pmol/min/mg enzyme for the formation of 16alpha,17alpha-estriol 17-O-(beta-D-glucuronate)</Vmax>
        <Vmax evidence="2">70.0 pmol/min/mg enzyme for the formation of 17alpha-estradiol 3-O-(beta-D-glucuronate)</Vmax>
        <Vmax evidence="2">62.8 pmol/min/mg enzyme for the formation of 17beta-estradiol 3-O-(beta-D-glucuronate)</Vmax>
        <Vmax evidence="3">69.0 pmol/min/mg enzyme with 4-nitrophenol as substrate</Vmax>
        <Vmax evidence="3">39.0 pmol/min/mg enzyme with 4-methyl-umbelliferone as substrate</Vmax>
        <Vmax evidence="3">124.0 pmol/min/mg enzyme with 4-phenylphenol as substrate</Vmax>
        <Vmax evidence="5">2621.7 pmol/min/mg enzyme for the formation of choloyl-24-O-(beta-D-glucuronate)</Vmax>
        <Vmax evidence="5">805.0 pmol/min/mg enzyme for the formation of chenodeoxycholoyl-24-O-(beta-D-glucuronate)</Vmax>
        <Vmax evidence="5">61.7 pmol/min/mg enzyme for the formation of lithocholoyl-3-O-(beta-D-glucuronate)</Vmax>
        <Vmax evidence="5">265.1 pmol/min/mg enzyme for the formation of lithocholoyl-24-O-(beta-D-glucuronate)</Vmax>
        <Vmax evidence="5">8.3 pmol/min/mg enzyme for the formation of deoxycholoyl-3-O-(beta-D-glucuronate)</Vmax>
        <Vmax evidence="5">196.7 pmol/min/mg enzyme for the formation of deoxycholoyl-24-O-(beta-D-glucuronate)</Vmax>
        <Vmax evidence="5">1373.3 pmol/min/mg enzyme for the formation of hyodeoxycholate 6-O-(beta-D-glucuronate)</Vmax>
        <Vmax evidence="5">28.3 pmol/min/mg enzyme for the formation of hyocholoyl-24-O-(beta-D-glucuronate)</Vmax>
        <Vmax evidence="5">65.1 pmol/min/mg enzyme for the formation of hyocholate 6-O-(beta-D-glucuronate)</Vmax>
        <Vmax evidence="5">911.7 pmol/min/mg enzyme for the formation of hyocholoyl-24-O-(beta-D-glucuronate)</Vmax>
    </kinetics>
</comment>
<comment type="subcellular location">
    <subcellularLocation>
        <location evidence="9">Endoplasmic reticulum membrane</location>
        <topology evidence="1">Multi-pass membrane protein</topology>
    </subcellularLocation>
</comment>
<comment type="alternative products">
    <event type="alternative splicing"/>
    <isoform>
        <id>P0DTE5-1</id>
        <name>1</name>
        <sequence type="displayed"/>
    </isoform>
    <isoform>
        <id>P0DTE5-2</id>
        <name>2</name>
        <sequence type="described" ref="VSP_060686"/>
    </isoform>
</comment>
<comment type="tissue specificity">
    <text evidence="3">Mainly expressed in the nasal mucosa.</text>
</comment>
<comment type="miscellaneous">
    <text evidence="6">UGT2A2 isoform is part of the UGT2A complex locus which displays alternative use of promoters and exons. The locus is defined by 2 alternative promoters resulting in 2 functionally active polypeptides UGT2A1 and UGT2A2. Alternative splicing of exons results in additional isoforms for each protein class.</text>
</comment>
<comment type="similarity">
    <text evidence="7">Belongs to the UDP-glycosyltransferase family.</text>
</comment>
<name>UD2A2_HUMAN</name>
<protein>
    <recommendedName>
        <fullName evidence="6">UDP-glucuronosyltransferase 2A2</fullName>
        <shortName>UDPGT 2A2</shortName>
        <ecNumber evidence="2 3 4 5">2.4.1.17</ecNumber>
    </recommendedName>
</protein>
<dbReference type="EC" id="2.4.1.17" evidence="2 3 4 5"/>
<dbReference type="EMBL" id="FJ664272">
    <property type="protein sequence ID" value="ACV70034.1"/>
    <property type="molecule type" value="mRNA"/>
</dbReference>
<dbReference type="EMBL" id="FJ664273">
    <property type="protein sequence ID" value="ACV70035.1"/>
    <property type="molecule type" value="mRNA"/>
</dbReference>
<dbReference type="EMBL" id="AC093829">
    <property type="status" value="NOT_ANNOTATED_CDS"/>
    <property type="molecule type" value="Genomic_DNA"/>
</dbReference>
<dbReference type="CCDS" id="CCDS56331.1">
    <molecule id="P0DTE5-1"/>
</dbReference>
<dbReference type="CCDS" id="CCDS77924.1">
    <molecule id="P0DTE5-2"/>
</dbReference>
<dbReference type="RefSeq" id="NP_001099147.2">
    <molecule id="P0DTE5-1"/>
    <property type="nucleotide sequence ID" value="NM_001105677.2"/>
</dbReference>
<dbReference type="RefSeq" id="NP_001288162.1">
    <molecule id="P0DTE5-2"/>
    <property type="nucleotide sequence ID" value="NM_001301233.1"/>
</dbReference>
<dbReference type="SMR" id="P0DTE5"/>
<dbReference type="FunCoup" id="P0DTE5">
    <property type="interactions" value="323"/>
</dbReference>
<dbReference type="IntAct" id="P0DTE5">
    <property type="interactions" value="1"/>
</dbReference>
<dbReference type="ChEMBL" id="CHEMBL4523985"/>
<dbReference type="SwissLipids" id="SLP:000001984"/>
<dbReference type="GlyCosmos" id="P0DTE5">
    <property type="glycosylation" value="3 sites, No reported glycans"/>
</dbReference>
<dbReference type="GlyGen" id="P0DTE5">
    <property type="glycosylation" value="4 sites"/>
</dbReference>
<dbReference type="iPTMnet" id="P0DTE5"/>
<dbReference type="PhosphoSitePlus" id="P0DTE5"/>
<dbReference type="jPOST" id="P0DTE5"/>
<dbReference type="MassIVE" id="P0DTE5"/>
<dbReference type="PeptideAtlas" id="P0DTE5"/>
<dbReference type="Antibodypedia" id="72053">
    <property type="antibodies" value="7 antibodies from 4 providers"/>
</dbReference>
<dbReference type="DNASU" id="574537"/>
<dbReference type="Ensembl" id="ENST00000604021.1">
    <molecule id="P0DTE5-2"/>
    <property type="protein sequence ID" value="ENSP00000474383.2"/>
    <property type="gene ID" value="ENSG00000271271.6"/>
</dbReference>
<dbReference type="Ensembl" id="ENST00000604629.6">
    <molecule id="P0DTE5-1"/>
    <property type="protein sequence ID" value="ENSP00000475028.2"/>
    <property type="gene ID" value="ENSG00000271271.6"/>
</dbReference>
<dbReference type="GeneID" id="574537"/>
<dbReference type="KEGG" id="hsa:574537"/>
<dbReference type="MANE-Select" id="ENST00000604629.6">
    <property type="protein sequence ID" value="ENSP00000475028.2"/>
    <property type="RefSeq nucleotide sequence ID" value="NM_001105677.2"/>
    <property type="RefSeq protein sequence ID" value="NP_001099147.2"/>
</dbReference>
<dbReference type="AGR" id="HGNC:28183"/>
<dbReference type="CTD" id="574537"/>
<dbReference type="DisGeNET" id="574537"/>
<dbReference type="GeneCards" id="UGT2A2"/>
<dbReference type="HGNC" id="HGNC:28183">
    <property type="gene designation" value="UGT2A2"/>
</dbReference>
<dbReference type="HPA" id="ENSG00000271271">
    <property type="expression patterns" value="Group enriched (kidney, liver)"/>
</dbReference>
<dbReference type="MIM" id="619809">
    <property type="type" value="gene"/>
</dbReference>
<dbReference type="neXtProt" id="NX_P0DTE5"/>
<dbReference type="GeneTree" id="ENSGT00940000161344"/>
<dbReference type="InParanoid" id="P0DTE5"/>
<dbReference type="OMA" id="ANNWERQ"/>
<dbReference type="OrthoDB" id="5835829at2759"/>
<dbReference type="Reactome" id="R-HSA-156588">
    <property type="pathway name" value="Glucuronidation"/>
</dbReference>
<dbReference type="Reactome" id="R-HSA-9749641">
    <property type="pathway name" value="Aspirin ADME"/>
</dbReference>
<dbReference type="PRO" id="PR:P0DTE5"/>
<dbReference type="Proteomes" id="UP000005640">
    <property type="component" value="Chromosome 4"/>
</dbReference>
<dbReference type="Bgee" id="ENSG00000271271">
    <property type="expression patterns" value="Expressed in male germ line stem cell (sensu Vertebrata) in testis and 13 other cell types or tissues"/>
</dbReference>
<dbReference type="GO" id="GO:0005789">
    <property type="term" value="C:endoplasmic reticulum membrane"/>
    <property type="evidence" value="ECO:0007669"/>
    <property type="project" value="UniProtKB-SubCell"/>
</dbReference>
<dbReference type="GO" id="GO:0015020">
    <property type="term" value="F:glucuronosyltransferase activity"/>
    <property type="evidence" value="ECO:0000314"/>
    <property type="project" value="UniProtKB"/>
</dbReference>
<dbReference type="GO" id="GO:0008206">
    <property type="term" value="P:bile acid metabolic process"/>
    <property type="evidence" value="ECO:0000314"/>
    <property type="project" value="UniProtKB"/>
</dbReference>
<dbReference type="GO" id="GO:0009608">
    <property type="term" value="P:response to symbiont"/>
    <property type="evidence" value="ECO:0000314"/>
    <property type="project" value="BHF-UCL"/>
</dbReference>
<dbReference type="GO" id="GO:0006805">
    <property type="term" value="P:xenobiotic metabolic process"/>
    <property type="evidence" value="ECO:0000314"/>
    <property type="project" value="BHF-UCL"/>
</dbReference>
<dbReference type="CDD" id="cd03784">
    <property type="entry name" value="GT1_Gtf-like"/>
    <property type="match status" value="1"/>
</dbReference>
<dbReference type="FunFam" id="3.40.50.2000:FF:000001">
    <property type="entry name" value="UDP-glucuronosyltransferase"/>
    <property type="match status" value="1"/>
</dbReference>
<dbReference type="FunFam" id="3.40.50.2000:FF:000081">
    <property type="entry name" value="UDP-glucuronosyltransferase 2A2"/>
    <property type="match status" value="1"/>
</dbReference>
<dbReference type="Gene3D" id="3.40.50.2000">
    <property type="entry name" value="Glycogen Phosphorylase B"/>
    <property type="match status" value="2"/>
</dbReference>
<dbReference type="InterPro" id="IPR050271">
    <property type="entry name" value="UDP-glycosyltransferase"/>
</dbReference>
<dbReference type="InterPro" id="IPR002213">
    <property type="entry name" value="UDP_glucos_trans"/>
</dbReference>
<dbReference type="InterPro" id="IPR035595">
    <property type="entry name" value="UDP_glycos_trans_CS"/>
</dbReference>
<dbReference type="PANTHER" id="PTHR48043">
    <property type="entry name" value="EG:EG0003.4 PROTEIN-RELATED"/>
    <property type="match status" value="1"/>
</dbReference>
<dbReference type="PANTHER" id="PTHR48043:SF129">
    <property type="entry name" value="UDP-GLUCURONOSYLTRANSFERASE 2A2"/>
    <property type="match status" value="1"/>
</dbReference>
<dbReference type="Pfam" id="PF00201">
    <property type="entry name" value="UDPGT"/>
    <property type="match status" value="1"/>
</dbReference>
<dbReference type="SUPFAM" id="SSF53756">
    <property type="entry name" value="UDP-Glycosyltransferase/glycogen phosphorylase"/>
    <property type="match status" value="1"/>
</dbReference>
<dbReference type="PROSITE" id="PS00375">
    <property type="entry name" value="UDPGT"/>
    <property type="match status" value="1"/>
</dbReference>
<evidence type="ECO:0000255" key="1"/>
<evidence type="ECO:0000269" key="2">
    <source>
    </source>
</evidence>
<evidence type="ECO:0000269" key="3">
    <source>
    </source>
</evidence>
<evidence type="ECO:0000269" key="4">
    <source>
    </source>
</evidence>
<evidence type="ECO:0000269" key="5">
    <source>
    </source>
</evidence>
<evidence type="ECO:0000303" key="6">
    <source>
    </source>
</evidence>
<evidence type="ECO:0000305" key="7"/>
<evidence type="ECO:0000305" key="8">
    <source>
    </source>
</evidence>
<evidence type="ECO:0000305" key="9">
    <source>
    </source>
</evidence>
<evidence type="ECO:0000305" key="10">
    <source>
    </source>
</evidence>
<evidence type="ECO:0000305" key="11">
    <source>
    </source>
</evidence>
<evidence type="ECO:0000312" key="12">
    <source>
        <dbReference type="HGNC" id="HGNC:28183"/>
    </source>
</evidence>
<feature type="chain" id="PRO_0000450721" description="UDP-glucuronosyltransferase 2A2">
    <location>
        <begin position="1"/>
        <end position="536"/>
    </location>
</feature>
<feature type="topological domain" description="Cytoplasmic" evidence="7">
    <location>
        <begin position="1"/>
        <end position="15"/>
    </location>
</feature>
<feature type="transmembrane region" description="Helical" evidence="1">
    <location>
        <begin position="16"/>
        <end position="36"/>
    </location>
</feature>
<feature type="topological domain" description="Lumenal" evidence="7">
    <location>
        <begin position="37"/>
        <end position="500"/>
    </location>
</feature>
<feature type="transmembrane region" description="Helical" evidence="1">
    <location>
        <begin position="501"/>
        <end position="521"/>
    </location>
</feature>
<feature type="topological domain" description="Cytoplasmic" evidence="7">
    <location>
        <begin position="522"/>
        <end position="536"/>
    </location>
</feature>
<feature type="glycosylation site" description="N-linked (GlcNAc...) asparagine" evidence="1">
    <location>
        <position position="58"/>
    </location>
</feature>
<feature type="glycosylation site" description="N-linked (GlcNAc...) asparagine" evidence="1">
    <location>
        <position position="322"/>
    </location>
</feature>
<feature type="glycosylation site" description="N-linked (GlcNAc...) asparagine" evidence="1">
    <location>
        <position position="356"/>
    </location>
</feature>
<feature type="splice variant" id="VSP_060686" description="In isoform 2.">
    <location>
        <begin position="298"/>
        <end position="341"/>
    </location>
</feature>
<accession>P0DTE5</accession>
<accession>B4E2F4</accession>
<accession>D3GER1</accession>
<accession>D3GER2</accession>
<accession>E9PDM7</accession>
<accession>J3KNA3</accession>
<accession>Q9Y4X1</accession>